<gene>
    <name type="primary">gapA</name>
    <name type="synonym">gap</name>
</gene>
<proteinExistence type="inferred from homology"/>
<keyword id="KW-0963">Cytoplasm</keyword>
<keyword id="KW-0324">Glycolysis</keyword>
<keyword id="KW-0520">NAD</keyword>
<keyword id="KW-0547">Nucleotide-binding</keyword>
<keyword id="KW-0560">Oxidoreductase</keyword>
<reference key="1">
    <citation type="submission" date="1999-03" db="EMBL/GenBank/DDBJ databases">
        <title>Isolation and characterisation of a glycolytic operon in Staphylococcus aureus.</title>
        <authorList>
            <person name="Morrissey J.A."/>
            <person name="Williams P."/>
        </authorList>
    </citation>
    <scope>NUCLEOTIDE SEQUENCE [GENOMIC DNA]</scope>
    <source>
        <strain>BB</strain>
    </source>
</reference>
<organism>
    <name type="scientific">Staphylococcus aureus</name>
    <dbReference type="NCBI Taxonomy" id="1280"/>
    <lineage>
        <taxon>Bacteria</taxon>
        <taxon>Bacillati</taxon>
        <taxon>Bacillota</taxon>
        <taxon>Bacilli</taxon>
        <taxon>Bacillales</taxon>
        <taxon>Staphylococcaceae</taxon>
        <taxon>Staphylococcus</taxon>
    </lineage>
</organism>
<protein>
    <recommendedName>
        <fullName evidence="2">Glyceraldehyde-3-phosphate dehydrogenase</fullName>
        <shortName evidence="2">GAPDH</shortName>
        <ecNumber evidence="2">1.2.1.12</ecNumber>
    </recommendedName>
    <alternativeName>
        <fullName evidence="2">NAD-dependent glyceraldehyde-3-phosphate dehydrogenase</fullName>
    </alternativeName>
</protein>
<evidence type="ECO:0000250" key="1">
    <source>
        <dbReference type="UniProtKB" id="P00362"/>
    </source>
</evidence>
<evidence type="ECO:0000250" key="2">
    <source>
        <dbReference type="UniProtKB" id="Q6GIL8"/>
    </source>
</evidence>
<evidence type="ECO:0000305" key="3"/>
<comment type="function">
    <text evidence="2">Catalyzes the oxidative phosphorylation of glyceraldehyde 3-phosphate (G3P) to 1,3-bisphosphoglycerate (BPG) using the cofactor NAD. The first reaction step involves the formation of a hemiacetal intermediate between G3P and a cysteine residue, and this hemiacetal intermediate is then oxidized to a thioester, with concomitant reduction of NAD to NADH. The reduced NADH is then exchanged with the second NAD, and the thioester is attacked by a nucleophilic inorganic phosphate to produce BPG.</text>
</comment>
<comment type="catalytic activity">
    <reaction evidence="2">
        <text>D-glyceraldehyde 3-phosphate + phosphate + NAD(+) = (2R)-3-phospho-glyceroyl phosphate + NADH + H(+)</text>
        <dbReference type="Rhea" id="RHEA:10300"/>
        <dbReference type="ChEBI" id="CHEBI:15378"/>
        <dbReference type="ChEBI" id="CHEBI:43474"/>
        <dbReference type="ChEBI" id="CHEBI:57540"/>
        <dbReference type="ChEBI" id="CHEBI:57604"/>
        <dbReference type="ChEBI" id="CHEBI:57945"/>
        <dbReference type="ChEBI" id="CHEBI:59776"/>
        <dbReference type="EC" id="1.2.1.12"/>
    </reaction>
</comment>
<comment type="pathway">
    <text evidence="3">Carbohydrate degradation; glycolysis; pyruvate from D-glyceraldehyde 3-phosphate: step 1/5.</text>
</comment>
<comment type="subunit">
    <text evidence="2">Homotetramer.</text>
</comment>
<comment type="subcellular location">
    <subcellularLocation>
        <location evidence="3">Cytoplasm</location>
    </subcellularLocation>
</comment>
<comment type="similarity">
    <text evidence="3">Belongs to the glyceraldehyde-3-phosphate dehydrogenase family.</text>
</comment>
<name>G3P_STAAU</name>
<accession>P0A038</accession>
<accession>Q9Z5C5</accession>
<dbReference type="EC" id="1.2.1.12" evidence="2"/>
<dbReference type="EMBL" id="AJ133520">
    <property type="protein sequence ID" value="CAB38645.1"/>
    <property type="molecule type" value="Genomic_DNA"/>
</dbReference>
<dbReference type="RefSeq" id="WP_000279414.1">
    <property type="nucleotide sequence ID" value="NZ_WYDB01000004.1"/>
</dbReference>
<dbReference type="SMR" id="P0A038"/>
<dbReference type="OMA" id="YGYTCNM"/>
<dbReference type="UniPathway" id="UPA00109">
    <property type="reaction ID" value="UER00184"/>
</dbReference>
<dbReference type="PHI-base" id="PHI:6904"/>
<dbReference type="GO" id="GO:1902494">
    <property type="term" value="C:catalytic complex"/>
    <property type="evidence" value="ECO:0000314"/>
    <property type="project" value="UniProtKB"/>
</dbReference>
<dbReference type="GO" id="GO:0005737">
    <property type="term" value="C:cytoplasm"/>
    <property type="evidence" value="ECO:0007669"/>
    <property type="project" value="UniProtKB-SubCell"/>
</dbReference>
<dbReference type="GO" id="GO:0009274">
    <property type="term" value="C:peptidoglycan-based cell wall"/>
    <property type="evidence" value="ECO:0000314"/>
    <property type="project" value="CAFA"/>
</dbReference>
<dbReference type="GO" id="GO:0004365">
    <property type="term" value="F:glyceraldehyde-3-phosphate dehydrogenase (NAD+) (phosphorylating) activity"/>
    <property type="evidence" value="ECO:0000314"/>
    <property type="project" value="CAFA"/>
</dbReference>
<dbReference type="GO" id="GO:0042802">
    <property type="term" value="F:identical protein binding"/>
    <property type="evidence" value="ECO:0000353"/>
    <property type="project" value="CAFA"/>
</dbReference>
<dbReference type="GO" id="GO:0051287">
    <property type="term" value="F:NAD binding"/>
    <property type="evidence" value="ECO:0000250"/>
    <property type="project" value="UniProtKB"/>
</dbReference>
<dbReference type="GO" id="GO:0070403">
    <property type="term" value="F:NAD+ binding"/>
    <property type="evidence" value="ECO:0000314"/>
    <property type="project" value="CAFA"/>
</dbReference>
<dbReference type="GO" id="GO:0050661">
    <property type="term" value="F:NADP binding"/>
    <property type="evidence" value="ECO:0007669"/>
    <property type="project" value="InterPro"/>
</dbReference>
<dbReference type="GO" id="GO:0002020">
    <property type="term" value="F:protease binding"/>
    <property type="evidence" value="ECO:0000314"/>
    <property type="project" value="CAFA"/>
</dbReference>
<dbReference type="GO" id="GO:0004998">
    <property type="term" value="F:transferrin receptor activity"/>
    <property type="evidence" value="ECO:0000314"/>
    <property type="project" value="CAFA"/>
</dbReference>
<dbReference type="GO" id="GO:0006006">
    <property type="term" value="P:glucose metabolic process"/>
    <property type="evidence" value="ECO:0007669"/>
    <property type="project" value="InterPro"/>
</dbReference>
<dbReference type="GO" id="GO:0006096">
    <property type="term" value="P:glycolytic process"/>
    <property type="evidence" value="ECO:0007669"/>
    <property type="project" value="UniProtKB-UniPathway"/>
</dbReference>
<dbReference type="GO" id="GO:0010039">
    <property type="term" value="P:response to iron ion"/>
    <property type="evidence" value="ECO:0000314"/>
    <property type="project" value="CAFA"/>
</dbReference>
<dbReference type="CDD" id="cd18126">
    <property type="entry name" value="GAPDH_I_C"/>
    <property type="match status" value="1"/>
</dbReference>
<dbReference type="CDD" id="cd05214">
    <property type="entry name" value="GAPDH_I_N"/>
    <property type="match status" value="1"/>
</dbReference>
<dbReference type="FunFam" id="3.30.360.10:FF:000002">
    <property type="entry name" value="Glyceraldehyde-3-phosphate dehydrogenase"/>
    <property type="match status" value="1"/>
</dbReference>
<dbReference type="FunFam" id="3.40.50.720:FF:000001">
    <property type="entry name" value="Glyceraldehyde-3-phosphate dehydrogenase"/>
    <property type="match status" value="1"/>
</dbReference>
<dbReference type="Gene3D" id="3.30.360.10">
    <property type="entry name" value="Dihydrodipicolinate Reductase, domain 2"/>
    <property type="match status" value="1"/>
</dbReference>
<dbReference type="Gene3D" id="3.40.50.720">
    <property type="entry name" value="NAD(P)-binding Rossmann-like Domain"/>
    <property type="match status" value="1"/>
</dbReference>
<dbReference type="InterPro" id="IPR020831">
    <property type="entry name" value="GlycerAld/Erythrose_P_DH"/>
</dbReference>
<dbReference type="InterPro" id="IPR020830">
    <property type="entry name" value="GlycerAld_3-P_DH_AS"/>
</dbReference>
<dbReference type="InterPro" id="IPR020829">
    <property type="entry name" value="GlycerAld_3-P_DH_cat"/>
</dbReference>
<dbReference type="InterPro" id="IPR020828">
    <property type="entry name" value="GlycerAld_3-P_DH_NAD(P)-bd"/>
</dbReference>
<dbReference type="InterPro" id="IPR006424">
    <property type="entry name" value="Glyceraldehyde-3-P_DH_1"/>
</dbReference>
<dbReference type="InterPro" id="IPR036291">
    <property type="entry name" value="NAD(P)-bd_dom_sf"/>
</dbReference>
<dbReference type="NCBIfam" id="TIGR01534">
    <property type="entry name" value="GAPDH-I"/>
    <property type="match status" value="1"/>
</dbReference>
<dbReference type="PANTHER" id="PTHR43148">
    <property type="entry name" value="GLYCERALDEHYDE-3-PHOSPHATE DEHYDROGENASE 2"/>
    <property type="match status" value="1"/>
</dbReference>
<dbReference type="Pfam" id="PF02800">
    <property type="entry name" value="Gp_dh_C"/>
    <property type="match status" value="1"/>
</dbReference>
<dbReference type="Pfam" id="PF00044">
    <property type="entry name" value="Gp_dh_N"/>
    <property type="match status" value="1"/>
</dbReference>
<dbReference type="PIRSF" id="PIRSF000149">
    <property type="entry name" value="GAP_DH"/>
    <property type="match status" value="1"/>
</dbReference>
<dbReference type="PRINTS" id="PR00078">
    <property type="entry name" value="G3PDHDRGNASE"/>
</dbReference>
<dbReference type="SMART" id="SM00846">
    <property type="entry name" value="Gp_dh_N"/>
    <property type="match status" value="1"/>
</dbReference>
<dbReference type="SUPFAM" id="SSF55347">
    <property type="entry name" value="Glyceraldehyde-3-phosphate dehydrogenase-like, C-terminal domain"/>
    <property type="match status" value="1"/>
</dbReference>
<dbReference type="SUPFAM" id="SSF51735">
    <property type="entry name" value="NAD(P)-binding Rossmann-fold domains"/>
    <property type="match status" value="1"/>
</dbReference>
<dbReference type="PROSITE" id="PS00071">
    <property type="entry name" value="GAPDH"/>
    <property type="match status" value="1"/>
</dbReference>
<feature type="chain" id="PRO_0000145688" description="Glyceraldehyde-3-phosphate dehydrogenase">
    <location>
        <begin position="1"/>
        <end position="336"/>
    </location>
</feature>
<feature type="active site" description="Nucleophile" evidence="2">
    <location>
        <position position="151"/>
    </location>
</feature>
<feature type="binding site" evidence="2">
    <location>
        <begin position="12"/>
        <end position="13"/>
    </location>
    <ligand>
        <name>NAD(+)</name>
        <dbReference type="ChEBI" id="CHEBI:57540"/>
    </ligand>
</feature>
<feature type="binding site" evidence="2">
    <location>
        <position position="34"/>
    </location>
    <ligand>
        <name>NAD(+)</name>
        <dbReference type="ChEBI" id="CHEBI:57540"/>
    </ligand>
</feature>
<feature type="binding site" evidence="2">
    <location>
        <position position="120"/>
    </location>
    <ligand>
        <name>NAD(+)</name>
        <dbReference type="ChEBI" id="CHEBI:57540"/>
    </ligand>
</feature>
<feature type="binding site" evidence="2">
    <location>
        <begin position="150"/>
        <end position="152"/>
    </location>
    <ligand>
        <name>D-glyceraldehyde 3-phosphate</name>
        <dbReference type="ChEBI" id="CHEBI:59776"/>
    </ligand>
</feature>
<feature type="binding site" evidence="2">
    <location>
        <position position="181"/>
    </location>
    <ligand>
        <name>D-glyceraldehyde 3-phosphate</name>
        <dbReference type="ChEBI" id="CHEBI:59776"/>
    </ligand>
</feature>
<feature type="binding site" evidence="1">
    <location>
        <position position="198"/>
    </location>
    <ligand>
        <name>D-glyceraldehyde 3-phosphate</name>
        <dbReference type="ChEBI" id="CHEBI:59776"/>
    </ligand>
</feature>
<feature type="binding site" evidence="2">
    <location>
        <begin position="211"/>
        <end position="212"/>
    </location>
    <ligand>
        <name>D-glyceraldehyde 3-phosphate</name>
        <dbReference type="ChEBI" id="CHEBI:59776"/>
    </ligand>
</feature>
<feature type="binding site" evidence="2">
    <location>
        <position position="234"/>
    </location>
    <ligand>
        <name>D-glyceraldehyde 3-phosphate</name>
        <dbReference type="ChEBI" id="CHEBI:59776"/>
    </ligand>
</feature>
<feature type="binding site" evidence="2">
    <location>
        <position position="316"/>
    </location>
    <ligand>
        <name>NAD(+)</name>
        <dbReference type="ChEBI" id="CHEBI:57540"/>
    </ligand>
</feature>
<feature type="site" description="Activates thiol group during catalysis" evidence="2">
    <location>
        <position position="178"/>
    </location>
</feature>
<sequence length="336" mass="36281">MAVKVAINGFGRIGRLAFRRIQEVEGLEVVAVNDLTDDDMLAHLLKYDTMQGRFTGEVEVVDGGFRVNGKEVKSFSEPDASKLPWKDLNIDVVLECTGFYTDKDKAQAHIEAGAKKVLISAPATGDLKTIVFNTNHQELDGSETVVSGASCTTNSLAPVAKVLNDDFGLVEGLMTTIHAYTGDQNTQDAPHRKGDKRRARAAAENIIPNSTGAAKAIGKVIPEIDGKLDGGAQRVPVATGSLTELTVVLEKQDVTVEQVNEAMKNASNESFGYTEDEIVSSDVVGMTYGSLFDATQTRVMSVGDRQLVKVAAWYDNEMSYTAQLVRTLAYLAELSK</sequence>